<protein>
    <recommendedName>
        <fullName evidence="1">Nucleotide-binding protein PP_0949</fullName>
    </recommendedName>
</protein>
<feature type="chain" id="PRO_0000107745" description="Nucleotide-binding protein PP_0949">
    <location>
        <begin position="1"/>
        <end position="284"/>
    </location>
</feature>
<feature type="binding site" evidence="1">
    <location>
        <begin position="8"/>
        <end position="15"/>
    </location>
    <ligand>
        <name>ATP</name>
        <dbReference type="ChEBI" id="CHEBI:30616"/>
    </ligand>
</feature>
<feature type="binding site" evidence="1">
    <location>
        <begin position="60"/>
        <end position="63"/>
    </location>
    <ligand>
        <name>GTP</name>
        <dbReference type="ChEBI" id="CHEBI:37565"/>
    </ligand>
</feature>
<evidence type="ECO:0000255" key="1">
    <source>
        <dbReference type="HAMAP-Rule" id="MF_00636"/>
    </source>
</evidence>
<dbReference type="EMBL" id="AE015451">
    <property type="protein sequence ID" value="AAN66574.1"/>
    <property type="molecule type" value="Genomic_DNA"/>
</dbReference>
<dbReference type="RefSeq" id="NP_743110.1">
    <property type="nucleotide sequence ID" value="NC_002947.4"/>
</dbReference>
<dbReference type="SMR" id="Q88PA1"/>
<dbReference type="STRING" id="160488.PP_0949"/>
<dbReference type="PaxDb" id="160488-PP_0949"/>
<dbReference type="KEGG" id="ppu:PP_0949"/>
<dbReference type="PATRIC" id="fig|160488.4.peg.1010"/>
<dbReference type="eggNOG" id="COG1660">
    <property type="taxonomic scope" value="Bacteria"/>
</dbReference>
<dbReference type="HOGENOM" id="CLU_059558_1_1_6"/>
<dbReference type="OrthoDB" id="9784461at2"/>
<dbReference type="PhylomeDB" id="Q88PA1"/>
<dbReference type="BioCyc" id="PPUT160488:G1G01-1023-MONOMER"/>
<dbReference type="Proteomes" id="UP000000556">
    <property type="component" value="Chromosome"/>
</dbReference>
<dbReference type="GO" id="GO:0005524">
    <property type="term" value="F:ATP binding"/>
    <property type="evidence" value="ECO:0007669"/>
    <property type="project" value="UniProtKB-UniRule"/>
</dbReference>
<dbReference type="GO" id="GO:0005525">
    <property type="term" value="F:GTP binding"/>
    <property type="evidence" value="ECO:0007669"/>
    <property type="project" value="UniProtKB-UniRule"/>
</dbReference>
<dbReference type="Gene3D" id="3.40.50.300">
    <property type="entry name" value="P-loop containing nucleotide triphosphate hydrolases"/>
    <property type="match status" value="1"/>
</dbReference>
<dbReference type="HAMAP" id="MF_00636">
    <property type="entry name" value="RapZ_like"/>
    <property type="match status" value="1"/>
</dbReference>
<dbReference type="InterPro" id="IPR027417">
    <property type="entry name" value="P-loop_NTPase"/>
</dbReference>
<dbReference type="InterPro" id="IPR005337">
    <property type="entry name" value="RapZ-like"/>
</dbReference>
<dbReference type="InterPro" id="IPR053930">
    <property type="entry name" value="RapZ-like_N"/>
</dbReference>
<dbReference type="InterPro" id="IPR053931">
    <property type="entry name" value="RapZ_C"/>
</dbReference>
<dbReference type="NCBIfam" id="NF003828">
    <property type="entry name" value="PRK05416.1"/>
    <property type="match status" value="1"/>
</dbReference>
<dbReference type="PANTHER" id="PTHR30448">
    <property type="entry name" value="RNASE ADAPTER PROTEIN RAPZ"/>
    <property type="match status" value="1"/>
</dbReference>
<dbReference type="PANTHER" id="PTHR30448:SF0">
    <property type="entry name" value="RNASE ADAPTER PROTEIN RAPZ"/>
    <property type="match status" value="1"/>
</dbReference>
<dbReference type="Pfam" id="PF22740">
    <property type="entry name" value="PapZ_C"/>
    <property type="match status" value="1"/>
</dbReference>
<dbReference type="Pfam" id="PF03668">
    <property type="entry name" value="RapZ-like_N"/>
    <property type="match status" value="1"/>
</dbReference>
<dbReference type="PIRSF" id="PIRSF005052">
    <property type="entry name" value="P-loopkin"/>
    <property type="match status" value="1"/>
</dbReference>
<dbReference type="SUPFAM" id="SSF52540">
    <property type="entry name" value="P-loop containing nucleoside triphosphate hydrolases"/>
    <property type="match status" value="1"/>
</dbReference>
<reference key="1">
    <citation type="journal article" date="2002" name="Environ. Microbiol.">
        <title>Complete genome sequence and comparative analysis of the metabolically versatile Pseudomonas putida KT2440.</title>
        <authorList>
            <person name="Nelson K.E."/>
            <person name="Weinel C."/>
            <person name="Paulsen I.T."/>
            <person name="Dodson R.J."/>
            <person name="Hilbert H."/>
            <person name="Martins dos Santos V.A.P."/>
            <person name="Fouts D.E."/>
            <person name="Gill S.R."/>
            <person name="Pop M."/>
            <person name="Holmes M."/>
            <person name="Brinkac L.M."/>
            <person name="Beanan M.J."/>
            <person name="DeBoy R.T."/>
            <person name="Daugherty S.C."/>
            <person name="Kolonay J.F."/>
            <person name="Madupu R."/>
            <person name="Nelson W.C."/>
            <person name="White O."/>
            <person name="Peterson J.D."/>
            <person name="Khouri H.M."/>
            <person name="Hance I."/>
            <person name="Chris Lee P."/>
            <person name="Holtzapple E.K."/>
            <person name="Scanlan D."/>
            <person name="Tran K."/>
            <person name="Moazzez A."/>
            <person name="Utterback T.R."/>
            <person name="Rizzo M."/>
            <person name="Lee K."/>
            <person name="Kosack D."/>
            <person name="Moestl D."/>
            <person name="Wedler H."/>
            <person name="Lauber J."/>
            <person name="Stjepandic D."/>
            <person name="Hoheisel J."/>
            <person name="Straetz M."/>
            <person name="Heim S."/>
            <person name="Kiewitz C."/>
            <person name="Eisen J.A."/>
            <person name="Timmis K.N."/>
            <person name="Duesterhoeft A."/>
            <person name="Tuemmler B."/>
            <person name="Fraser C.M."/>
        </authorList>
    </citation>
    <scope>NUCLEOTIDE SEQUENCE [LARGE SCALE GENOMIC DNA]</scope>
    <source>
        <strain>ATCC 47054 / DSM 6125 / CFBP 8728 / NCIMB 11950 / KT2440</strain>
    </source>
</reference>
<proteinExistence type="inferred from homology"/>
<comment type="function">
    <text evidence="1">Displays ATPase and GTPase activities.</text>
</comment>
<comment type="similarity">
    <text evidence="1">Belongs to the RapZ-like family.</text>
</comment>
<accession>Q88PA1</accession>
<organism>
    <name type="scientific">Pseudomonas putida (strain ATCC 47054 / DSM 6125 / CFBP 8728 / NCIMB 11950 / KT2440)</name>
    <dbReference type="NCBI Taxonomy" id="160488"/>
    <lineage>
        <taxon>Bacteria</taxon>
        <taxon>Pseudomonadati</taxon>
        <taxon>Pseudomonadota</taxon>
        <taxon>Gammaproteobacteria</taxon>
        <taxon>Pseudomonadales</taxon>
        <taxon>Pseudomonadaceae</taxon>
        <taxon>Pseudomonas</taxon>
    </lineage>
</organism>
<keyword id="KW-0067">ATP-binding</keyword>
<keyword id="KW-0342">GTP-binding</keyword>
<keyword id="KW-0547">Nucleotide-binding</keyword>
<keyword id="KW-1185">Reference proteome</keyword>
<gene>
    <name type="ordered locus">PP_0949</name>
</gene>
<sequence length="284" mass="32098">MRLIIVSGRSGSGKSTALDVLEDSGFYCIDNLPAGLLPQLAENALINTELLQPKVAVSIDARNLPSHLMRFPELLEEARARHIQCDVLYLDADEEVLLKRFSETRRRHPLTNANRSLAEAIRVESDLLGPIADLADLKIDTTNLNLYQLRDSIKLRLLNQPEPGTAFLVESFGFKRGMPVDADLVFDVRCLPNPYWKPELREHSGLDQPVIDYLAAQPDVEDMYNDISSYLLKWLPRFAASNRAYVTIAIGCTGGHHRSVYITERLGRQLQQTLKNVQVRHRDL</sequence>
<name>Y949_PSEPK</name>